<name>RL22_STRP4</name>
<feature type="chain" id="PRO_1000142315" description="Large ribosomal subunit protein uL22">
    <location>
        <begin position="1"/>
        <end position="114"/>
    </location>
</feature>
<reference key="1">
    <citation type="journal article" date="2001" name="Microb. Drug Resist.">
        <title>Annotated draft genomic sequence from a Streptococcus pneumoniae type 19F clinical isolate.</title>
        <authorList>
            <person name="Dopazo J."/>
            <person name="Mendoza A."/>
            <person name="Herrero J."/>
            <person name="Caldara F."/>
            <person name="Humbert Y."/>
            <person name="Friedli L."/>
            <person name="Guerrier M."/>
            <person name="Grand-Schenk E."/>
            <person name="Gandin C."/>
            <person name="de Francesco M."/>
            <person name="Polissi A."/>
            <person name="Buell G."/>
            <person name="Feger G."/>
            <person name="Garcia E."/>
            <person name="Peitsch M."/>
            <person name="Garcia-Bustos J.F."/>
        </authorList>
    </citation>
    <scope>NUCLEOTIDE SEQUENCE [LARGE SCALE GENOMIC DNA]</scope>
    <source>
        <strain>G54</strain>
    </source>
</reference>
<reference key="2">
    <citation type="submission" date="2008-03" db="EMBL/GenBank/DDBJ databases">
        <title>Pneumococcal beta glucoside metabolism investigated by whole genome comparison.</title>
        <authorList>
            <person name="Mulas L."/>
            <person name="Trappetti C."/>
            <person name="Hakenbeck R."/>
            <person name="Iannelli F."/>
            <person name="Pozzi G."/>
            <person name="Davidsen T.M."/>
            <person name="Tettelin H."/>
            <person name="Oggioni M."/>
        </authorList>
    </citation>
    <scope>NUCLEOTIDE SEQUENCE [LARGE SCALE GENOMIC DNA]</scope>
    <source>
        <strain>G54</strain>
    </source>
</reference>
<organism>
    <name type="scientific">Streptococcus pneumoniae serotype 19F (strain G54)</name>
    <dbReference type="NCBI Taxonomy" id="512566"/>
    <lineage>
        <taxon>Bacteria</taxon>
        <taxon>Bacillati</taxon>
        <taxon>Bacillota</taxon>
        <taxon>Bacilli</taxon>
        <taxon>Lactobacillales</taxon>
        <taxon>Streptococcaceae</taxon>
        <taxon>Streptococcus</taxon>
    </lineage>
</organism>
<dbReference type="EMBL" id="CP001015">
    <property type="protein sequence ID" value="ACF56280.1"/>
    <property type="molecule type" value="Genomic_DNA"/>
</dbReference>
<dbReference type="SMR" id="B5E6G0"/>
<dbReference type="KEGG" id="spx:SPG_0200"/>
<dbReference type="HOGENOM" id="CLU_083987_3_3_9"/>
<dbReference type="GO" id="GO:0022625">
    <property type="term" value="C:cytosolic large ribosomal subunit"/>
    <property type="evidence" value="ECO:0007669"/>
    <property type="project" value="TreeGrafter"/>
</dbReference>
<dbReference type="GO" id="GO:0019843">
    <property type="term" value="F:rRNA binding"/>
    <property type="evidence" value="ECO:0007669"/>
    <property type="project" value="UniProtKB-UniRule"/>
</dbReference>
<dbReference type="GO" id="GO:0003735">
    <property type="term" value="F:structural constituent of ribosome"/>
    <property type="evidence" value="ECO:0007669"/>
    <property type="project" value="InterPro"/>
</dbReference>
<dbReference type="GO" id="GO:0006412">
    <property type="term" value="P:translation"/>
    <property type="evidence" value="ECO:0007669"/>
    <property type="project" value="UniProtKB-UniRule"/>
</dbReference>
<dbReference type="CDD" id="cd00336">
    <property type="entry name" value="Ribosomal_L22"/>
    <property type="match status" value="1"/>
</dbReference>
<dbReference type="FunFam" id="3.90.470.10:FF:000001">
    <property type="entry name" value="50S ribosomal protein L22"/>
    <property type="match status" value="1"/>
</dbReference>
<dbReference type="Gene3D" id="3.90.470.10">
    <property type="entry name" value="Ribosomal protein L22/L17"/>
    <property type="match status" value="1"/>
</dbReference>
<dbReference type="HAMAP" id="MF_01331_B">
    <property type="entry name" value="Ribosomal_uL22_B"/>
    <property type="match status" value="1"/>
</dbReference>
<dbReference type="InterPro" id="IPR001063">
    <property type="entry name" value="Ribosomal_uL22"/>
</dbReference>
<dbReference type="InterPro" id="IPR005727">
    <property type="entry name" value="Ribosomal_uL22_bac/chlpt-type"/>
</dbReference>
<dbReference type="InterPro" id="IPR047867">
    <property type="entry name" value="Ribosomal_uL22_bac/org-type"/>
</dbReference>
<dbReference type="InterPro" id="IPR018260">
    <property type="entry name" value="Ribosomal_uL22_CS"/>
</dbReference>
<dbReference type="InterPro" id="IPR036394">
    <property type="entry name" value="Ribosomal_uL22_sf"/>
</dbReference>
<dbReference type="NCBIfam" id="TIGR01044">
    <property type="entry name" value="rplV_bact"/>
    <property type="match status" value="1"/>
</dbReference>
<dbReference type="PANTHER" id="PTHR13501">
    <property type="entry name" value="CHLOROPLAST 50S RIBOSOMAL PROTEIN L22-RELATED"/>
    <property type="match status" value="1"/>
</dbReference>
<dbReference type="PANTHER" id="PTHR13501:SF8">
    <property type="entry name" value="LARGE RIBOSOMAL SUBUNIT PROTEIN UL22M"/>
    <property type="match status" value="1"/>
</dbReference>
<dbReference type="Pfam" id="PF00237">
    <property type="entry name" value="Ribosomal_L22"/>
    <property type="match status" value="1"/>
</dbReference>
<dbReference type="SUPFAM" id="SSF54843">
    <property type="entry name" value="Ribosomal protein L22"/>
    <property type="match status" value="1"/>
</dbReference>
<dbReference type="PROSITE" id="PS00464">
    <property type="entry name" value="RIBOSOMAL_L22"/>
    <property type="match status" value="1"/>
</dbReference>
<evidence type="ECO:0000255" key="1">
    <source>
        <dbReference type="HAMAP-Rule" id="MF_01331"/>
    </source>
</evidence>
<evidence type="ECO:0000305" key="2"/>
<proteinExistence type="inferred from homology"/>
<protein>
    <recommendedName>
        <fullName evidence="1">Large ribosomal subunit protein uL22</fullName>
    </recommendedName>
    <alternativeName>
        <fullName evidence="2">50S ribosomal protein L22</fullName>
    </alternativeName>
</protein>
<keyword id="KW-0687">Ribonucleoprotein</keyword>
<keyword id="KW-0689">Ribosomal protein</keyword>
<keyword id="KW-0694">RNA-binding</keyword>
<keyword id="KW-0699">rRNA-binding</keyword>
<comment type="function">
    <text evidence="1">This protein binds specifically to 23S rRNA; its binding is stimulated by other ribosomal proteins, e.g. L4, L17, and L20. It is important during the early stages of 50S assembly. It makes multiple contacts with different domains of the 23S rRNA in the assembled 50S subunit and ribosome (By similarity).</text>
</comment>
<comment type="function">
    <text evidence="1">The globular domain of the protein is located near the polypeptide exit tunnel on the outside of the subunit, while an extended beta-hairpin is found that lines the wall of the exit tunnel in the center of the 70S ribosome.</text>
</comment>
<comment type="subunit">
    <text evidence="1">Part of the 50S ribosomal subunit.</text>
</comment>
<comment type="similarity">
    <text evidence="1">Belongs to the universal ribosomal protein uL22 family.</text>
</comment>
<accession>B5E6G0</accession>
<gene>
    <name evidence="1" type="primary">rplV</name>
    <name type="ordered locus">SPG_0200</name>
</gene>
<sequence length="114" mass="12200">MAEITSAKAMARTVRVSPRKSRLVLDNIRGKSVADAIAILTFTPNKAAEIILKVLNSAVANAENNFGLDKANLVVSEAFANEGPTMKRFRPRAKGSASPINKRTAHITVAVAEK</sequence>